<sequence>MVIMGNELQLENKILKGTTTVGIRVNDGVILAADRRASAGFFVANKMVRKVLYITDKIGITTAGSVADLQFIYDVLKNIYHYNSITKYGPISIKGIATRLANVLSATKYFPYIVQILIGGYDDQPRLFNLDYLGDITEENYVATGSGSPVAMGVLEDEYNPKMTLDEAADLAKRAVFSAIKRDSFTGTGVIVAKIHSKGHEELEFYLNKKM</sequence>
<keyword id="KW-0068">Autocatalytic cleavage</keyword>
<keyword id="KW-0963">Cytoplasm</keyword>
<keyword id="KW-0378">Hydrolase</keyword>
<keyword id="KW-0645">Protease</keyword>
<keyword id="KW-0647">Proteasome</keyword>
<keyword id="KW-0888">Threonine protease</keyword>
<keyword id="KW-0865">Zymogen</keyword>
<proteinExistence type="inferred from homology"/>
<dbReference type="EC" id="3.4.25.1" evidence="1"/>
<dbReference type="EMBL" id="CP001800">
    <property type="protein sequence ID" value="ACX92039.1"/>
    <property type="status" value="ALT_INIT"/>
    <property type="molecule type" value="Genomic_DNA"/>
</dbReference>
<dbReference type="RefSeq" id="WP_029552577.1">
    <property type="nucleotide sequence ID" value="NZ_ACUK01000205.1"/>
</dbReference>
<dbReference type="SMR" id="D0KTH0"/>
<dbReference type="MEROPS" id="T01.002"/>
<dbReference type="GeneID" id="1455030"/>
<dbReference type="KEGG" id="sol:Ssol_1825"/>
<dbReference type="HOGENOM" id="CLU_035750_7_2_2"/>
<dbReference type="GO" id="GO:0005737">
    <property type="term" value="C:cytoplasm"/>
    <property type="evidence" value="ECO:0007669"/>
    <property type="project" value="UniProtKB-SubCell"/>
</dbReference>
<dbReference type="GO" id="GO:0019774">
    <property type="term" value="C:proteasome core complex, beta-subunit complex"/>
    <property type="evidence" value="ECO:0007669"/>
    <property type="project" value="UniProtKB-UniRule"/>
</dbReference>
<dbReference type="GO" id="GO:0004298">
    <property type="term" value="F:threonine-type endopeptidase activity"/>
    <property type="evidence" value="ECO:0007669"/>
    <property type="project" value="UniProtKB-UniRule"/>
</dbReference>
<dbReference type="GO" id="GO:0010498">
    <property type="term" value="P:proteasomal protein catabolic process"/>
    <property type="evidence" value="ECO:0007669"/>
    <property type="project" value="UniProtKB-UniRule"/>
</dbReference>
<dbReference type="CDD" id="cd03764">
    <property type="entry name" value="proteasome_beta_archeal"/>
    <property type="match status" value="1"/>
</dbReference>
<dbReference type="FunFam" id="3.60.20.10:FF:000049">
    <property type="entry name" value="Proteasome subunit beta"/>
    <property type="match status" value="1"/>
</dbReference>
<dbReference type="Gene3D" id="3.60.20.10">
    <property type="entry name" value="Glutamine Phosphoribosylpyrophosphate, subunit 1, domain 1"/>
    <property type="match status" value="1"/>
</dbReference>
<dbReference type="HAMAP" id="MF_02113_A">
    <property type="entry name" value="Proteasome_B_A"/>
    <property type="match status" value="1"/>
</dbReference>
<dbReference type="InterPro" id="IPR029055">
    <property type="entry name" value="Ntn_hydrolases_N"/>
</dbReference>
<dbReference type="InterPro" id="IPR019983">
    <property type="entry name" value="Pept_T1A_Psome_bsu_arc"/>
</dbReference>
<dbReference type="InterPro" id="IPR000243">
    <property type="entry name" value="Pept_T1A_subB"/>
</dbReference>
<dbReference type="InterPro" id="IPR016050">
    <property type="entry name" value="Proteasome_bsu_CS"/>
</dbReference>
<dbReference type="InterPro" id="IPR001353">
    <property type="entry name" value="Proteasome_sua/b"/>
</dbReference>
<dbReference type="InterPro" id="IPR023333">
    <property type="entry name" value="Proteasome_suB-type"/>
</dbReference>
<dbReference type="NCBIfam" id="TIGR03634">
    <property type="entry name" value="arc_protsome_B"/>
    <property type="match status" value="1"/>
</dbReference>
<dbReference type="PANTHER" id="PTHR32194:SF0">
    <property type="entry name" value="ATP-DEPENDENT PROTEASE SUBUNIT HSLV"/>
    <property type="match status" value="1"/>
</dbReference>
<dbReference type="PANTHER" id="PTHR32194">
    <property type="entry name" value="METALLOPROTEASE TLDD"/>
    <property type="match status" value="1"/>
</dbReference>
<dbReference type="Pfam" id="PF00227">
    <property type="entry name" value="Proteasome"/>
    <property type="match status" value="1"/>
</dbReference>
<dbReference type="PRINTS" id="PR00141">
    <property type="entry name" value="PROTEASOME"/>
</dbReference>
<dbReference type="SUPFAM" id="SSF56235">
    <property type="entry name" value="N-terminal nucleophile aminohydrolases (Ntn hydrolases)"/>
    <property type="match status" value="1"/>
</dbReference>
<dbReference type="PROSITE" id="PS00854">
    <property type="entry name" value="PROTEASOME_BETA_1"/>
    <property type="match status" value="1"/>
</dbReference>
<dbReference type="PROSITE" id="PS51476">
    <property type="entry name" value="PROTEASOME_BETA_2"/>
    <property type="match status" value="1"/>
</dbReference>
<accession>D0KTH0</accession>
<organism>
    <name type="scientific">Saccharolobus solfataricus (strain 98/2)</name>
    <name type="common">Sulfolobus solfataricus</name>
    <dbReference type="NCBI Taxonomy" id="555311"/>
    <lineage>
        <taxon>Archaea</taxon>
        <taxon>Thermoproteota</taxon>
        <taxon>Thermoprotei</taxon>
        <taxon>Sulfolobales</taxon>
        <taxon>Sulfolobaceae</taxon>
        <taxon>Saccharolobus</taxon>
    </lineage>
</organism>
<name>PSB2_SACS9</name>
<feature type="propeptide" id="PRO_0000397458" description="Removed in mature form; by autocatalysis" evidence="1">
    <location>
        <begin position="1"/>
        <end position="17"/>
    </location>
</feature>
<feature type="chain" id="PRO_0000397459" description="Proteasome subunit beta 2">
    <location>
        <begin position="18"/>
        <end position="211"/>
    </location>
</feature>
<feature type="active site" description="Nucleophile" evidence="1">
    <location>
        <position position="18"/>
    </location>
</feature>
<reference key="1">
    <citation type="submission" date="2009-10" db="EMBL/GenBank/DDBJ databases">
        <title>Complete sequence of Sulfolobus solfataricus 98/2.</title>
        <authorList>
            <consortium name="US DOE Joint Genome Institute"/>
            <person name="Lucas S."/>
            <person name="Copeland A."/>
            <person name="Lapidus A."/>
            <person name="Glavina del Rio T."/>
            <person name="Tice H."/>
            <person name="Bruce D."/>
            <person name="Goodwin L."/>
            <person name="Pitluck S."/>
            <person name="Munk A.C."/>
            <person name="Brettin T."/>
            <person name="Detter J.C."/>
            <person name="Han C."/>
            <person name="Tapia R."/>
            <person name="Larimer F."/>
            <person name="Land M."/>
            <person name="Hauser L."/>
            <person name="Kyrpides N."/>
            <person name="Ovchinnikova G."/>
            <person name="Mead D."/>
        </authorList>
    </citation>
    <scope>NUCLEOTIDE SEQUENCE [LARGE SCALE GENOMIC DNA]</scope>
    <source>
        <strain>98/2</strain>
    </source>
</reference>
<evidence type="ECO:0000255" key="1">
    <source>
        <dbReference type="HAMAP-Rule" id="MF_02113"/>
    </source>
</evidence>
<evidence type="ECO:0000305" key="2"/>
<gene>
    <name evidence="1" type="primary">psmB2</name>
    <name type="ordered locus">Ssol_1825</name>
</gene>
<comment type="function">
    <text evidence="1">Component of the proteasome core, a large protease complex with broad specificity involved in protein degradation.</text>
</comment>
<comment type="catalytic activity">
    <reaction evidence="1">
        <text>Cleavage of peptide bonds with very broad specificity.</text>
        <dbReference type="EC" id="3.4.25.1"/>
    </reaction>
</comment>
<comment type="activity regulation">
    <text evidence="1">The formation of the proteasomal ATPase PAN-20S proteasome complex, via the docking of the C-termini of PAN into the intersubunit pockets in the alpha-rings, triggers opening of the gate for substrate entry. Interconversion between the open-gate and close-gate conformations leads to a dynamic regulation of the 20S proteasome proteolysis activity.</text>
</comment>
<comment type="subunit">
    <text evidence="1">The 20S proteasome core is composed of 14 alpha and 14 beta subunits that assemble into four stacked heptameric rings, resulting in a barrel-shaped structure. The two inner rings, each composed of seven catalytic beta subunits, are sandwiched by two outer rings, each composed of seven alpha subunits. The catalytic chamber with the active sites is on the inside of the barrel. Has a gated structure, the ends of the cylinder being occluded by the N-termini of the alpha-subunits. Is capped at one or both ends by the proteasome regulatory ATPase, PAN.</text>
</comment>
<comment type="subcellular location">
    <subcellularLocation>
        <location evidence="1">Cytoplasm</location>
    </subcellularLocation>
</comment>
<comment type="similarity">
    <text evidence="1">Belongs to the peptidase T1B family.</text>
</comment>
<comment type="sequence caution" evidence="2">
    <conflict type="erroneous initiation">
        <sequence resource="EMBL-CDS" id="ACX92039"/>
    </conflict>
    <text>Extended N-terminus.</text>
</comment>
<protein>
    <recommendedName>
        <fullName evidence="1">Proteasome subunit beta 2</fullName>
        <ecNumber evidence="1">3.4.25.1</ecNumber>
    </recommendedName>
    <alternativeName>
        <fullName evidence="1">20S proteasome beta subunit 2</fullName>
    </alternativeName>
    <alternativeName>
        <fullName evidence="1">Proteasome core protein PsmB 2</fullName>
    </alternativeName>
</protein>